<proteinExistence type="inferred from homology"/>
<organism>
    <name type="scientific">Janthinobacterium sp. (strain Marseille)</name>
    <name type="common">Minibacterium massiliensis</name>
    <dbReference type="NCBI Taxonomy" id="375286"/>
    <lineage>
        <taxon>Bacteria</taxon>
        <taxon>Pseudomonadati</taxon>
        <taxon>Pseudomonadota</taxon>
        <taxon>Betaproteobacteria</taxon>
        <taxon>Burkholderiales</taxon>
        <taxon>Oxalobacteraceae</taxon>
        <taxon>Janthinobacterium</taxon>
    </lineage>
</organism>
<feature type="chain" id="PRO_1000066474" description="Orotidine 5'-phosphate decarboxylase">
    <location>
        <begin position="1"/>
        <end position="271"/>
    </location>
</feature>
<feature type="active site" description="Proton donor" evidence="1">
    <location>
        <position position="95"/>
    </location>
</feature>
<name>PYRF_JANMA</name>
<evidence type="ECO:0000255" key="1">
    <source>
        <dbReference type="HAMAP-Rule" id="MF_01215"/>
    </source>
</evidence>
<accession>A6SVJ9</accession>
<reference key="1">
    <citation type="journal article" date="2007" name="PLoS Genet.">
        <title>Genome analysis of Minibacterium massiliensis highlights the convergent evolution of water-living bacteria.</title>
        <authorList>
            <person name="Audic S."/>
            <person name="Robert C."/>
            <person name="Campagna B."/>
            <person name="Parinello H."/>
            <person name="Claverie J.-M."/>
            <person name="Raoult D."/>
            <person name="Drancourt M."/>
        </authorList>
    </citation>
    <scope>NUCLEOTIDE SEQUENCE [LARGE SCALE GENOMIC DNA]</scope>
    <source>
        <strain>Marseille</strain>
    </source>
</reference>
<protein>
    <recommendedName>
        <fullName evidence="1">Orotidine 5'-phosphate decarboxylase</fullName>
        <ecNumber evidence="1">4.1.1.23</ecNumber>
    </recommendedName>
    <alternativeName>
        <fullName evidence="1">OMP decarboxylase</fullName>
        <shortName evidence="1">OMPDCase</shortName>
        <shortName evidence="1">OMPdecase</shortName>
    </alternativeName>
</protein>
<keyword id="KW-0210">Decarboxylase</keyword>
<keyword id="KW-0456">Lyase</keyword>
<keyword id="KW-0665">Pyrimidine biosynthesis</keyword>
<sequence>MTFIEKLSAVWQSQKTQLCIGLDPDLAKFPAHLKGKPDAILTFCKEIIDATADTACAFKPQIAYFAALRAEDQLEAICSYLRERYPHIPIVLDAKRGDIGATAEQYAREAFERYGADAVTVNPYMGFDSVQPYLERPDRGVIVLCRTSNAGGSDLQFLNVDGKPLYQHVAQLVADKWNTNGQCALVVGATFPNELAQVRALVGDMPLLIPGIGAQGGDIKATVEAGRTANGTGMMINSSRAILYAKADETFAQAARQVALETRDAINRYIA</sequence>
<dbReference type="EC" id="4.1.1.23" evidence="1"/>
<dbReference type="EMBL" id="CP000269">
    <property type="protein sequence ID" value="ABR88485.1"/>
    <property type="molecule type" value="Genomic_DNA"/>
</dbReference>
<dbReference type="RefSeq" id="WP_012078470.1">
    <property type="nucleotide sequence ID" value="NC_009659.1"/>
</dbReference>
<dbReference type="SMR" id="A6SVJ9"/>
<dbReference type="STRING" id="375286.mma_0606"/>
<dbReference type="KEGG" id="mms:mma_0606"/>
<dbReference type="eggNOG" id="COG0284">
    <property type="taxonomic scope" value="Bacteria"/>
</dbReference>
<dbReference type="HOGENOM" id="CLU_060704_1_0_4"/>
<dbReference type="OrthoDB" id="9808470at2"/>
<dbReference type="UniPathway" id="UPA00070">
    <property type="reaction ID" value="UER00120"/>
</dbReference>
<dbReference type="Proteomes" id="UP000006388">
    <property type="component" value="Chromosome"/>
</dbReference>
<dbReference type="GO" id="GO:0004590">
    <property type="term" value="F:orotidine-5'-phosphate decarboxylase activity"/>
    <property type="evidence" value="ECO:0007669"/>
    <property type="project" value="UniProtKB-UniRule"/>
</dbReference>
<dbReference type="GO" id="GO:0006207">
    <property type="term" value="P:'de novo' pyrimidine nucleobase biosynthetic process"/>
    <property type="evidence" value="ECO:0007669"/>
    <property type="project" value="InterPro"/>
</dbReference>
<dbReference type="GO" id="GO:0044205">
    <property type="term" value="P:'de novo' UMP biosynthetic process"/>
    <property type="evidence" value="ECO:0007669"/>
    <property type="project" value="UniProtKB-UniRule"/>
</dbReference>
<dbReference type="CDD" id="cd04725">
    <property type="entry name" value="OMP_decarboxylase_like"/>
    <property type="match status" value="1"/>
</dbReference>
<dbReference type="Gene3D" id="3.20.20.70">
    <property type="entry name" value="Aldolase class I"/>
    <property type="match status" value="1"/>
</dbReference>
<dbReference type="HAMAP" id="MF_01215">
    <property type="entry name" value="OMPdecase_type2"/>
    <property type="match status" value="1"/>
</dbReference>
<dbReference type="InterPro" id="IPR013785">
    <property type="entry name" value="Aldolase_TIM"/>
</dbReference>
<dbReference type="InterPro" id="IPR018089">
    <property type="entry name" value="OMPdecase_AS"/>
</dbReference>
<dbReference type="InterPro" id="IPR011995">
    <property type="entry name" value="OMPdecase_type-2"/>
</dbReference>
<dbReference type="InterPro" id="IPR001754">
    <property type="entry name" value="OMPdeCOase_dom"/>
</dbReference>
<dbReference type="InterPro" id="IPR011060">
    <property type="entry name" value="RibuloseP-bd_barrel"/>
</dbReference>
<dbReference type="NCBIfam" id="TIGR02127">
    <property type="entry name" value="pyrF_sub2"/>
    <property type="match status" value="1"/>
</dbReference>
<dbReference type="PANTHER" id="PTHR43375">
    <property type="entry name" value="OROTIDINE 5'-PHOSPHATE DECARBOXYLASE"/>
    <property type="match status" value="1"/>
</dbReference>
<dbReference type="PANTHER" id="PTHR43375:SF1">
    <property type="entry name" value="OROTIDINE 5'-PHOSPHATE DECARBOXYLASE"/>
    <property type="match status" value="1"/>
</dbReference>
<dbReference type="Pfam" id="PF00215">
    <property type="entry name" value="OMPdecase"/>
    <property type="match status" value="1"/>
</dbReference>
<dbReference type="SMART" id="SM00934">
    <property type="entry name" value="OMPdecase"/>
    <property type="match status" value="1"/>
</dbReference>
<dbReference type="SUPFAM" id="SSF51366">
    <property type="entry name" value="Ribulose-phoshate binding barrel"/>
    <property type="match status" value="1"/>
</dbReference>
<dbReference type="PROSITE" id="PS00156">
    <property type="entry name" value="OMPDECASE"/>
    <property type="match status" value="1"/>
</dbReference>
<gene>
    <name evidence="1" type="primary">pyrF</name>
    <name type="ordered locus">mma_0606</name>
</gene>
<comment type="catalytic activity">
    <reaction evidence="1">
        <text>orotidine 5'-phosphate + H(+) = UMP + CO2</text>
        <dbReference type="Rhea" id="RHEA:11596"/>
        <dbReference type="ChEBI" id="CHEBI:15378"/>
        <dbReference type="ChEBI" id="CHEBI:16526"/>
        <dbReference type="ChEBI" id="CHEBI:57538"/>
        <dbReference type="ChEBI" id="CHEBI:57865"/>
        <dbReference type="EC" id="4.1.1.23"/>
    </reaction>
</comment>
<comment type="pathway">
    <text evidence="1">Pyrimidine metabolism; UMP biosynthesis via de novo pathway; UMP from orotate: step 2/2.</text>
</comment>
<comment type="similarity">
    <text evidence="1">Belongs to the OMP decarboxylase family. Type 2 subfamily.</text>
</comment>